<accession>C1CCT8</accession>
<proteinExistence type="inferred from homology"/>
<sequence length="930" mass="102937">MSKKRLYEIAKELGKESKEVVARAKELGLDVKSHSSSVEEAVAAKIAASFKPAAAPKVEAKPAAPKVSAEKKTEKSEPAKPAVAKEEAKPAEPVAPKTEKVAAKPQSRNFKAEREARAKEQAERRKQNKGNNRDQQQNGNRQKNDGRNGGKQGQSNRDNRRFNDQAKKQQGQQKRRNERRQQEDKRSNQAAPRIDFKARAAALKAEQNAEYARSSEERFKQYQAAKEALAQANKRKEPEEIFEEAAKLAEQAQQVQAVVEVVPEKKEPAVDTRRKKQARPDKNRDDYDHEEDGPRKQQKNRSSQNQVRNQKNSNWNNNKKNKKGNNKNNRNQTPKPVTERKFHELPTEFEYTDGMTVAEIAKRIKREPAEIVKKLFMMGVMATQNQSLDGETIELLMVDYGIEAKQKVEVDNADIERFFVEDGYLNEDELVERPPVVTIMGHVDHGKTTLLDTLRNSRVATGEAGGITQHIGAYQIVENGKKITFLDTPGHAAFTSMRARGASVTDITILVVAADDGVMPQTIEAINHSKAANVPIIVAINKIDKPGANPERVIGELAEHGVMSTAWGGDSEFVEISAKFNQNIEELLETVLLVAEIQELKADPTVRAIGTVIEARLDKGKGAVATLLVQQGTLNVQDPIVVGNTFGRVRAMTNDLGRRVKVAGPSTPVSITGLNEAPMAGDHFAVYEDEKSARAAGEERAKRALMKQRQATQRVSLENLFDTLKAGELKSVNVIIKADVQGSVEALSASLQKIDVEGVKVTIVHSAVGAINESDVTLAEASNAFIVGFNVRPTPQARQQAEADDVEIRLHSIIYKVIEEMEEAMKGMLDPEFEEKVIGEAVIRETFKVSKVGTIGGFMVINGKVARDSKVRVIRDGVVIYDGELASLKHYKDDVKEVTNGREGGLMIDGYNDIKMDDVIEAYVMEEIKR</sequence>
<evidence type="ECO:0000250" key="1"/>
<evidence type="ECO:0000255" key="2">
    <source>
        <dbReference type="HAMAP-Rule" id="MF_00100"/>
    </source>
</evidence>
<evidence type="ECO:0000256" key="3">
    <source>
        <dbReference type="SAM" id="MobiDB-lite"/>
    </source>
</evidence>
<reference key="1">
    <citation type="journal article" date="2010" name="Genome Biol.">
        <title>Structure and dynamics of the pan-genome of Streptococcus pneumoniae and closely related species.</title>
        <authorList>
            <person name="Donati C."/>
            <person name="Hiller N.L."/>
            <person name="Tettelin H."/>
            <person name="Muzzi A."/>
            <person name="Croucher N.J."/>
            <person name="Angiuoli S.V."/>
            <person name="Oggioni M."/>
            <person name="Dunning Hotopp J.C."/>
            <person name="Hu F.Z."/>
            <person name="Riley D.R."/>
            <person name="Covacci A."/>
            <person name="Mitchell T.J."/>
            <person name="Bentley S.D."/>
            <person name="Kilian M."/>
            <person name="Ehrlich G.D."/>
            <person name="Rappuoli R."/>
            <person name="Moxon E.R."/>
            <person name="Masignani V."/>
        </authorList>
    </citation>
    <scope>NUCLEOTIDE SEQUENCE [LARGE SCALE GENOMIC DNA]</scope>
    <source>
        <strain>JJA</strain>
    </source>
</reference>
<gene>
    <name evidence="2" type="primary">infB</name>
    <name type="ordered locus">SPJ_0516</name>
</gene>
<protein>
    <recommendedName>
        <fullName evidence="2">Translation initiation factor IF-2</fullName>
    </recommendedName>
</protein>
<dbReference type="EMBL" id="CP000919">
    <property type="protein sequence ID" value="ACO19602.1"/>
    <property type="molecule type" value="Genomic_DNA"/>
</dbReference>
<dbReference type="RefSeq" id="WP_000039219.1">
    <property type="nucleotide sequence ID" value="NC_012466.1"/>
</dbReference>
<dbReference type="SMR" id="C1CCT8"/>
<dbReference type="KEGG" id="sjj:SPJ_0516"/>
<dbReference type="HOGENOM" id="CLU_006301_5_0_9"/>
<dbReference type="Proteomes" id="UP000002206">
    <property type="component" value="Chromosome"/>
</dbReference>
<dbReference type="GO" id="GO:0005829">
    <property type="term" value="C:cytosol"/>
    <property type="evidence" value="ECO:0007669"/>
    <property type="project" value="TreeGrafter"/>
</dbReference>
<dbReference type="GO" id="GO:0005525">
    <property type="term" value="F:GTP binding"/>
    <property type="evidence" value="ECO:0007669"/>
    <property type="project" value="UniProtKB-KW"/>
</dbReference>
<dbReference type="GO" id="GO:0003924">
    <property type="term" value="F:GTPase activity"/>
    <property type="evidence" value="ECO:0007669"/>
    <property type="project" value="UniProtKB-UniRule"/>
</dbReference>
<dbReference type="GO" id="GO:0003743">
    <property type="term" value="F:translation initiation factor activity"/>
    <property type="evidence" value="ECO:0007669"/>
    <property type="project" value="UniProtKB-UniRule"/>
</dbReference>
<dbReference type="CDD" id="cd01887">
    <property type="entry name" value="IF2_eIF5B"/>
    <property type="match status" value="1"/>
</dbReference>
<dbReference type="CDD" id="cd03702">
    <property type="entry name" value="IF2_mtIF2_II"/>
    <property type="match status" value="1"/>
</dbReference>
<dbReference type="CDD" id="cd03692">
    <property type="entry name" value="mtIF2_IVc"/>
    <property type="match status" value="1"/>
</dbReference>
<dbReference type="FunFam" id="1.10.10.2480:FF:000003">
    <property type="entry name" value="Translation initiation factor IF-2"/>
    <property type="match status" value="1"/>
</dbReference>
<dbReference type="FunFam" id="2.40.30.10:FF:000007">
    <property type="entry name" value="Translation initiation factor IF-2"/>
    <property type="match status" value="1"/>
</dbReference>
<dbReference type="FunFam" id="2.40.30.10:FF:000008">
    <property type="entry name" value="Translation initiation factor IF-2"/>
    <property type="match status" value="1"/>
</dbReference>
<dbReference type="FunFam" id="3.40.50.10050:FF:000001">
    <property type="entry name" value="Translation initiation factor IF-2"/>
    <property type="match status" value="1"/>
</dbReference>
<dbReference type="FunFam" id="3.40.50.300:FF:000019">
    <property type="entry name" value="Translation initiation factor IF-2"/>
    <property type="match status" value="1"/>
</dbReference>
<dbReference type="Gene3D" id="1.10.10.2480">
    <property type="match status" value="1"/>
</dbReference>
<dbReference type="Gene3D" id="3.40.50.300">
    <property type="entry name" value="P-loop containing nucleotide triphosphate hydrolases"/>
    <property type="match status" value="1"/>
</dbReference>
<dbReference type="Gene3D" id="2.40.30.10">
    <property type="entry name" value="Translation factors"/>
    <property type="match status" value="2"/>
</dbReference>
<dbReference type="Gene3D" id="3.40.50.10050">
    <property type="entry name" value="Translation initiation factor IF- 2, domain 3"/>
    <property type="match status" value="1"/>
</dbReference>
<dbReference type="HAMAP" id="MF_00100_B">
    <property type="entry name" value="IF_2_B"/>
    <property type="match status" value="1"/>
</dbReference>
<dbReference type="InterPro" id="IPR053905">
    <property type="entry name" value="EF-G-like_DII"/>
</dbReference>
<dbReference type="InterPro" id="IPR044145">
    <property type="entry name" value="IF2_II"/>
</dbReference>
<dbReference type="InterPro" id="IPR006847">
    <property type="entry name" value="IF2_N"/>
</dbReference>
<dbReference type="InterPro" id="IPR027417">
    <property type="entry name" value="P-loop_NTPase"/>
</dbReference>
<dbReference type="InterPro" id="IPR005225">
    <property type="entry name" value="Small_GTP-bd"/>
</dbReference>
<dbReference type="InterPro" id="IPR000795">
    <property type="entry name" value="T_Tr_GTP-bd_dom"/>
</dbReference>
<dbReference type="InterPro" id="IPR000178">
    <property type="entry name" value="TF_IF2_bacterial-like"/>
</dbReference>
<dbReference type="InterPro" id="IPR015760">
    <property type="entry name" value="TIF_IF2"/>
</dbReference>
<dbReference type="InterPro" id="IPR023115">
    <property type="entry name" value="TIF_IF2_dom3"/>
</dbReference>
<dbReference type="InterPro" id="IPR036925">
    <property type="entry name" value="TIF_IF2_dom3_sf"/>
</dbReference>
<dbReference type="InterPro" id="IPR009000">
    <property type="entry name" value="Transl_B-barrel_sf"/>
</dbReference>
<dbReference type="NCBIfam" id="TIGR00487">
    <property type="entry name" value="IF-2"/>
    <property type="match status" value="1"/>
</dbReference>
<dbReference type="NCBIfam" id="TIGR00231">
    <property type="entry name" value="small_GTP"/>
    <property type="match status" value="1"/>
</dbReference>
<dbReference type="PANTHER" id="PTHR43381:SF5">
    <property type="entry name" value="TR-TYPE G DOMAIN-CONTAINING PROTEIN"/>
    <property type="match status" value="1"/>
</dbReference>
<dbReference type="PANTHER" id="PTHR43381">
    <property type="entry name" value="TRANSLATION INITIATION FACTOR IF-2-RELATED"/>
    <property type="match status" value="1"/>
</dbReference>
<dbReference type="Pfam" id="PF22042">
    <property type="entry name" value="EF-G_D2"/>
    <property type="match status" value="1"/>
</dbReference>
<dbReference type="Pfam" id="PF00009">
    <property type="entry name" value="GTP_EFTU"/>
    <property type="match status" value="1"/>
</dbReference>
<dbReference type="Pfam" id="PF11987">
    <property type="entry name" value="IF-2"/>
    <property type="match status" value="1"/>
</dbReference>
<dbReference type="Pfam" id="PF04760">
    <property type="entry name" value="IF2_N"/>
    <property type="match status" value="2"/>
</dbReference>
<dbReference type="SUPFAM" id="SSF52156">
    <property type="entry name" value="Initiation factor IF2/eIF5b, domain 3"/>
    <property type="match status" value="1"/>
</dbReference>
<dbReference type="SUPFAM" id="SSF52540">
    <property type="entry name" value="P-loop containing nucleoside triphosphate hydrolases"/>
    <property type="match status" value="1"/>
</dbReference>
<dbReference type="SUPFAM" id="SSF50447">
    <property type="entry name" value="Translation proteins"/>
    <property type="match status" value="2"/>
</dbReference>
<dbReference type="PROSITE" id="PS51722">
    <property type="entry name" value="G_TR_2"/>
    <property type="match status" value="1"/>
</dbReference>
<dbReference type="PROSITE" id="PS01176">
    <property type="entry name" value="IF2"/>
    <property type="match status" value="1"/>
</dbReference>
<name>IF2_STRZJ</name>
<comment type="function">
    <text evidence="2">One of the essential components for the initiation of protein synthesis. Protects formylmethionyl-tRNA from spontaneous hydrolysis and promotes its binding to the 30S ribosomal subunits. Also involved in the hydrolysis of GTP during the formation of the 70S ribosomal complex.</text>
</comment>
<comment type="subcellular location">
    <subcellularLocation>
        <location evidence="2">Cytoplasm</location>
    </subcellularLocation>
</comment>
<comment type="similarity">
    <text evidence="2">Belongs to the TRAFAC class translation factor GTPase superfamily. Classic translation factor GTPase family. IF-2 subfamily.</text>
</comment>
<organism>
    <name type="scientific">Streptococcus pneumoniae (strain JJA)</name>
    <dbReference type="NCBI Taxonomy" id="488222"/>
    <lineage>
        <taxon>Bacteria</taxon>
        <taxon>Bacillati</taxon>
        <taxon>Bacillota</taxon>
        <taxon>Bacilli</taxon>
        <taxon>Lactobacillales</taxon>
        <taxon>Streptococcaceae</taxon>
        <taxon>Streptococcus</taxon>
    </lineage>
</organism>
<keyword id="KW-0963">Cytoplasm</keyword>
<keyword id="KW-0342">GTP-binding</keyword>
<keyword id="KW-0396">Initiation factor</keyword>
<keyword id="KW-0547">Nucleotide-binding</keyword>
<keyword id="KW-0648">Protein biosynthesis</keyword>
<feature type="chain" id="PRO_1000190637" description="Translation initiation factor IF-2">
    <location>
        <begin position="1"/>
        <end position="930"/>
    </location>
</feature>
<feature type="domain" description="tr-type G">
    <location>
        <begin position="432"/>
        <end position="599"/>
    </location>
</feature>
<feature type="region of interest" description="Disordered" evidence="3">
    <location>
        <begin position="50"/>
        <end position="195"/>
    </location>
</feature>
<feature type="region of interest" description="Disordered" evidence="3">
    <location>
        <begin position="260"/>
        <end position="346"/>
    </location>
</feature>
<feature type="region of interest" description="G1" evidence="1">
    <location>
        <begin position="441"/>
        <end position="448"/>
    </location>
</feature>
<feature type="region of interest" description="G2" evidence="1">
    <location>
        <begin position="466"/>
        <end position="470"/>
    </location>
</feature>
<feature type="region of interest" description="G3" evidence="1">
    <location>
        <begin position="487"/>
        <end position="490"/>
    </location>
</feature>
<feature type="region of interest" description="G4" evidence="1">
    <location>
        <begin position="541"/>
        <end position="544"/>
    </location>
</feature>
<feature type="region of interest" description="G5" evidence="1">
    <location>
        <begin position="577"/>
        <end position="579"/>
    </location>
</feature>
<feature type="compositionally biased region" description="Low complexity" evidence="3">
    <location>
        <begin position="50"/>
        <end position="67"/>
    </location>
</feature>
<feature type="compositionally biased region" description="Basic and acidic residues" evidence="3">
    <location>
        <begin position="68"/>
        <end position="90"/>
    </location>
</feature>
<feature type="compositionally biased region" description="Basic and acidic residues" evidence="3">
    <location>
        <begin position="110"/>
        <end position="125"/>
    </location>
</feature>
<feature type="compositionally biased region" description="Low complexity" evidence="3">
    <location>
        <begin position="129"/>
        <end position="141"/>
    </location>
</feature>
<feature type="compositionally biased region" description="Basic and acidic residues" evidence="3">
    <location>
        <begin position="157"/>
        <end position="167"/>
    </location>
</feature>
<feature type="compositionally biased region" description="Basic and acidic residues" evidence="3">
    <location>
        <begin position="262"/>
        <end position="295"/>
    </location>
</feature>
<feature type="compositionally biased region" description="Low complexity" evidence="3">
    <location>
        <begin position="309"/>
        <end position="318"/>
    </location>
</feature>
<feature type="compositionally biased region" description="Basic and acidic residues" evidence="3">
    <location>
        <begin position="337"/>
        <end position="346"/>
    </location>
</feature>
<feature type="binding site" evidence="2">
    <location>
        <begin position="441"/>
        <end position="448"/>
    </location>
    <ligand>
        <name>GTP</name>
        <dbReference type="ChEBI" id="CHEBI:37565"/>
    </ligand>
</feature>
<feature type="binding site" evidence="2">
    <location>
        <begin position="487"/>
        <end position="491"/>
    </location>
    <ligand>
        <name>GTP</name>
        <dbReference type="ChEBI" id="CHEBI:37565"/>
    </ligand>
</feature>
<feature type="binding site" evidence="2">
    <location>
        <begin position="541"/>
        <end position="544"/>
    </location>
    <ligand>
        <name>GTP</name>
        <dbReference type="ChEBI" id="CHEBI:37565"/>
    </ligand>
</feature>